<accession>Q80UW0</accession>
<accession>A2AEM4</accession>
<accession>Q3TAR0</accession>
<accession>Q6P4N9</accession>
<accession>Q8C785</accession>
<accession>Q9QYK6</accession>
<protein>
    <recommendedName>
        <fullName>Heparan-sulfate 6-O-sulfotransferase 2</fullName>
        <shortName>HS6ST-2</shortName>
        <shortName>mHS6ST-2</shortName>
        <ecNumber>2.8.2.-</ecNumber>
    </recommendedName>
</protein>
<name>H6ST2_MOUSE</name>
<keyword id="KW-0025">Alternative splicing</keyword>
<keyword id="KW-0325">Glycoprotein</keyword>
<keyword id="KW-0472">Membrane</keyword>
<keyword id="KW-1185">Reference proteome</keyword>
<keyword id="KW-0735">Signal-anchor</keyword>
<keyword id="KW-0808">Transferase</keyword>
<keyword id="KW-0812">Transmembrane</keyword>
<keyword id="KW-1133">Transmembrane helix</keyword>
<sequence length="612" mass="69198">MALPAFAARALGPPLQPEQGAPARTTCPRRHSRVEAELAASRPGSVAASVRAGPPRGVSLGFNSPPLQDKPPKAFSSLAGALRAPLFALLPRGRRRRMHDLRRRWDLGSLCRALLTRGLAAVGHSLKHVLSAIFSKIFGPLASVGNMDEKSNKLLLALVMLFLFAVIVLQYVCPGTECQLLRLQAFSSPVPDPYRSEDESSARFVPRYNFSRGDLLRKVDFDIKGDDLIVFLHIQKTGGTTFGRHLVRNIQLEQPCECRVGQKKCTCHRPGKRETWLFSRFSTGWSCGLHADWTELTSCVPAVVDGKRDARLRPSRNFHYITILRDPVSRYLSEWRHVQRGATWKASLHVCDGRPPTSEELPSCYTGDDWSGCPLKEFMDCPYNLANNRQVRMLSDLTLVGCYNLSVMPEKQRNKVLLESAKSNLKHMAFFGLTEFQRKTQYLFEKTFNMNFISPFTQYNTTRASSVEINEEIQKRIEGLNFLDMELYSYAKDLFLQRYQFMRQKEHQDARRKRQEQRKFLKGRFLQTHFQSQSQGQSQSQSPGQNLSQNPNPNPNQNLTQNLSHNLTPSSNPNSTQRENRGSQKQGSGQGQGDSGTSNGTNDYIGSVETWR</sequence>
<organism>
    <name type="scientific">Mus musculus</name>
    <name type="common">Mouse</name>
    <dbReference type="NCBI Taxonomy" id="10090"/>
    <lineage>
        <taxon>Eukaryota</taxon>
        <taxon>Metazoa</taxon>
        <taxon>Chordata</taxon>
        <taxon>Craniata</taxon>
        <taxon>Vertebrata</taxon>
        <taxon>Euteleostomi</taxon>
        <taxon>Mammalia</taxon>
        <taxon>Eutheria</taxon>
        <taxon>Euarchontoglires</taxon>
        <taxon>Glires</taxon>
        <taxon>Rodentia</taxon>
        <taxon>Myomorpha</taxon>
        <taxon>Muroidea</taxon>
        <taxon>Muridae</taxon>
        <taxon>Murinae</taxon>
        <taxon>Mus</taxon>
        <taxon>Mus</taxon>
    </lineage>
</organism>
<comment type="function">
    <text>6-O-sulfation enzyme which catalyzes the transfer of sulfate from 3'-phosphoadenosine 5'-phosphosulfate (PAPS) to position 6 of the N-sulfoglucosamine residue (GlcNS) of heparan sulfate.</text>
</comment>
<comment type="catalytic activity">
    <reaction>
        <text>alpha-D-glucosaminyl-[heparan sulfate](n) + 3'-phosphoadenylyl sulfate = 6-sulfo-alpha-D-glucosaminyl-[heparan sulfate](n) + adenosine 3',5'-bisphosphate + H(+)</text>
        <dbReference type="Rhea" id="RHEA:56604"/>
        <dbReference type="Rhea" id="RHEA-COMP:9830"/>
        <dbReference type="Rhea" id="RHEA-COMP:14621"/>
        <dbReference type="ChEBI" id="CHEBI:15378"/>
        <dbReference type="ChEBI" id="CHEBI:58339"/>
        <dbReference type="ChEBI" id="CHEBI:58343"/>
        <dbReference type="ChEBI" id="CHEBI:58388"/>
        <dbReference type="ChEBI" id="CHEBI:140604"/>
    </reaction>
</comment>
<comment type="subcellular location">
    <subcellularLocation>
        <location evidence="7">Membrane</location>
        <topology evidence="7">Single-pass type II membrane protein</topology>
    </subcellularLocation>
</comment>
<comment type="alternative products">
    <event type="alternative splicing"/>
    <isoform>
        <id>Q80UW0-1</id>
        <name>1</name>
        <sequence type="displayed"/>
    </isoform>
    <isoform>
        <id>Q80UW0-2</id>
        <name>2</name>
        <sequence type="described" ref="VSP_015848"/>
    </isoform>
    <isoform>
        <id>Q80UW0-3</id>
        <name>3</name>
        <sequence type="described" ref="VSP_015849"/>
    </isoform>
</comment>
<comment type="similarity">
    <text evidence="7">Belongs to the sulfotransferase 6 family.</text>
</comment>
<comment type="sequence caution" evidence="7">
    <conflict type="erroneous initiation">
        <sequence resource="EMBL-CDS" id="BAC34950"/>
    </conflict>
</comment>
<gene>
    <name type="primary">Hs6st2</name>
</gene>
<proteinExistence type="evidence at transcript level"/>
<dbReference type="EC" id="2.8.2.-"/>
<dbReference type="EMBL" id="AK052348">
    <property type="protein sequence ID" value="BAC34950.1"/>
    <property type="status" value="ALT_INIT"/>
    <property type="molecule type" value="mRNA"/>
</dbReference>
<dbReference type="EMBL" id="AK171680">
    <property type="protein sequence ID" value="BAE42608.1"/>
    <property type="molecule type" value="mRNA"/>
</dbReference>
<dbReference type="EMBL" id="AL671918">
    <property type="status" value="NOT_ANNOTATED_CDS"/>
    <property type="molecule type" value="Genomic_DNA"/>
</dbReference>
<dbReference type="EMBL" id="AL672057">
    <property type="status" value="NOT_ANNOTATED_CDS"/>
    <property type="molecule type" value="Genomic_DNA"/>
</dbReference>
<dbReference type="EMBL" id="AL672099">
    <property type="status" value="NOT_ANNOTATED_CDS"/>
    <property type="molecule type" value="Genomic_DNA"/>
</dbReference>
<dbReference type="EMBL" id="BC047151">
    <property type="protein sequence ID" value="AAH47151.1"/>
    <property type="molecule type" value="mRNA"/>
</dbReference>
<dbReference type="EMBL" id="BC063327">
    <property type="protein sequence ID" value="AAH63327.1"/>
    <property type="molecule type" value="mRNA"/>
</dbReference>
<dbReference type="EMBL" id="AB024565">
    <property type="protein sequence ID" value="BAA89247.1"/>
    <property type="molecule type" value="mRNA"/>
</dbReference>
<dbReference type="CCDS" id="CCDS40970.1">
    <molecule id="Q80UW0-3"/>
</dbReference>
<dbReference type="CCDS" id="CCDS72379.1">
    <molecule id="Q80UW0-1"/>
</dbReference>
<dbReference type="RefSeq" id="NP_001070670.1">
    <molecule id="Q80UW0-3"/>
    <property type="nucleotide sequence ID" value="NM_001077202.3"/>
</dbReference>
<dbReference type="RefSeq" id="NP_001277396.1">
    <molecule id="Q80UW0-1"/>
    <property type="nucleotide sequence ID" value="NM_001290467.2"/>
</dbReference>
<dbReference type="RefSeq" id="NP_001277397.1">
    <property type="nucleotide sequence ID" value="NM_001290468.1"/>
</dbReference>
<dbReference type="RefSeq" id="NP_001413101.1">
    <molecule id="Q80UW0-2"/>
    <property type="nucleotide sequence ID" value="NM_001426172.1"/>
</dbReference>
<dbReference type="RefSeq" id="NP_056634.3">
    <molecule id="Q80UW0-2"/>
    <property type="nucleotide sequence ID" value="NM_015819.5"/>
</dbReference>
<dbReference type="RefSeq" id="XP_006541581.1">
    <property type="nucleotide sequence ID" value="XM_006541518.2"/>
</dbReference>
<dbReference type="RefSeq" id="XP_006541582.1">
    <property type="nucleotide sequence ID" value="XM_006541519.3"/>
</dbReference>
<dbReference type="RefSeq" id="XP_036017898.1">
    <molecule id="Q80UW0-2"/>
    <property type="nucleotide sequence ID" value="XM_036162005.1"/>
</dbReference>
<dbReference type="SMR" id="Q80UW0"/>
<dbReference type="FunCoup" id="Q80UW0">
    <property type="interactions" value="671"/>
</dbReference>
<dbReference type="STRING" id="10090.ENSMUSP00000085497"/>
<dbReference type="GlyCosmos" id="Q80UW0">
    <property type="glycosylation" value="8 sites, No reported glycans"/>
</dbReference>
<dbReference type="GlyGen" id="Q80UW0">
    <property type="glycosylation" value="8 sites, 3 N-linked glycans (3 sites)"/>
</dbReference>
<dbReference type="PhosphoSitePlus" id="Q80UW0"/>
<dbReference type="PaxDb" id="10090-ENSMUSP00000085497"/>
<dbReference type="PeptideAtlas" id="Q80UW0"/>
<dbReference type="ProteomicsDB" id="269669">
    <molecule id="Q80UW0-1"/>
</dbReference>
<dbReference type="ProteomicsDB" id="269670">
    <molecule id="Q80UW0-2"/>
</dbReference>
<dbReference type="ProteomicsDB" id="269671">
    <molecule id="Q80UW0-3"/>
</dbReference>
<dbReference type="ABCD" id="Q80UW0">
    <property type="antibodies" value="2 sequenced antibodies"/>
</dbReference>
<dbReference type="Antibodypedia" id="30253">
    <property type="antibodies" value="76 antibodies from 19 providers"/>
</dbReference>
<dbReference type="DNASU" id="50786"/>
<dbReference type="Ensembl" id="ENSMUST00000088172.12">
    <molecule id="Q80UW0-3"/>
    <property type="protein sequence ID" value="ENSMUSP00000085497.6"/>
    <property type="gene ID" value="ENSMUSG00000062184.12"/>
</dbReference>
<dbReference type="Ensembl" id="ENSMUST00000114871.2">
    <molecule id="Q80UW0-1"/>
    <property type="protein sequence ID" value="ENSMUSP00000110521.2"/>
    <property type="gene ID" value="ENSMUSG00000062184.12"/>
</dbReference>
<dbReference type="GeneID" id="50786"/>
<dbReference type="KEGG" id="mmu:50786"/>
<dbReference type="UCSC" id="uc009tdw.2">
    <molecule id="Q80UW0-1"/>
    <property type="organism name" value="mouse"/>
</dbReference>
<dbReference type="UCSC" id="uc009tdx.2">
    <molecule id="Q80UW0-3"/>
    <property type="organism name" value="mouse"/>
</dbReference>
<dbReference type="AGR" id="MGI:1354959"/>
<dbReference type="CTD" id="90161"/>
<dbReference type="MGI" id="MGI:1354959">
    <property type="gene designation" value="Hs6st2"/>
</dbReference>
<dbReference type="VEuPathDB" id="HostDB:ENSMUSG00000062184"/>
<dbReference type="eggNOG" id="KOG3955">
    <property type="taxonomic scope" value="Eukaryota"/>
</dbReference>
<dbReference type="GeneTree" id="ENSGT00950000183071"/>
<dbReference type="HOGENOM" id="CLU_027877_1_0_1"/>
<dbReference type="InParanoid" id="Q80UW0"/>
<dbReference type="OMA" id="WDLDENS"/>
<dbReference type="OrthoDB" id="65269at9989"/>
<dbReference type="TreeFam" id="TF312835"/>
<dbReference type="Reactome" id="R-MMU-2022928">
    <property type="pathway name" value="HS-GAG biosynthesis"/>
</dbReference>
<dbReference type="SABIO-RK" id="Q80UW0"/>
<dbReference type="BioGRID-ORCS" id="50786">
    <property type="hits" value="3 hits in 79 CRISPR screens"/>
</dbReference>
<dbReference type="ChiTaRS" id="Hs6st2">
    <property type="organism name" value="mouse"/>
</dbReference>
<dbReference type="PRO" id="PR:Q80UW0"/>
<dbReference type="Proteomes" id="UP000000589">
    <property type="component" value="Chromosome X"/>
</dbReference>
<dbReference type="RNAct" id="Q80UW0">
    <property type="molecule type" value="protein"/>
</dbReference>
<dbReference type="Bgee" id="ENSMUSG00000062184">
    <property type="expression patterns" value="Expressed in choroid plexus epithelium and 267 other cell types or tissues"/>
</dbReference>
<dbReference type="GO" id="GO:0005794">
    <property type="term" value="C:Golgi apparatus"/>
    <property type="evidence" value="ECO:0000314"/>
    <property type="project" value="MGI"/>
</dbReference>
<dbReference type="GO" id="GO:0016020">
    <property type="term" value="C:membrane"/>
    <property type="evidence" value="ECO:0007669"/>
    <property type="project" value="UniProtKB-SubCell"/>
</dbReference>
<dbReference type="GO" id="GO:0017095">
    <property type="term" value="F:heparan sulfate 6-sulfotransferase activity"/>
    <property type="evidence" value="ECO:0000314"/>
    <property type="project" value="MGI"/>
</dbReference>
<dbReference type="GO" id="GO:0015012">
    <property type="term" value="P:heparan sulfate proteoglycan biosynthetic process"/>
    <property type="evidence" value="ECO:0000314"/>
    <property type="project" value="MGI"/>
</dbReference>
<dbReference type="FunFam" id="3.40.50.300:FF:000852">
    <property type="entry name" value="Heparan-sulfate 6-O-sulfotransferase"/>
    <property type="match status" value="1"/>
</dbReference>
<dbReference type="FunFam" id="3.40.50.300:FF:001933">
    <property type="entry name" value="Heparan-sulfate 6-O-sulfotransferase"/>
    <property type="match status" value="1"/>
</dbReference>
<dbReference type="Gene3D" id="3.40.50.300">
    <property type="entry name" value="P-loop containing nucleotide triphosphate hydrolases"/>
    <property type="match status" value="1"/>
</dbReference>
<dbReference type="InterPro" id="IPR010635">
    <property type="entry name" value="Heparan_SO4-6-sulfoTrfase"/>
</dbReference>
<dbReference type="InterPro" id="IPR027417">
    <property type="entry name" value="P-loop_NTPase"/>
</dbReference>
<dbReference type="InterPro" id="IPR005331">
    <property type="entry name" value="Sulfotransferase"/>
</dbReference>
<dbReference type="PANTHER" id="PTHR12812">
    <property type="entry name" value="HEPARAN SULFATE 6-O-SULFOTRANSFERASE 3"/>
    <property type="match status" value="1"/>
</dbReference>
<dbReference type="PANTHER" id="PTHR12812:SF6">
    <property type="entry name" value="HEPARAN-SULFATE 6-O-SULFOTRANSFERASE 2"/>
    <property type="match status" value="1"/>
</dbReference>
<dbReference type="Pfam" id="PF03567">
    <property type="entry name" value="Sulfotransfer_2"/>
    <property type="match status" value="1"/>
</dbReference>
<dbReference type="SUPFAM" id="SSF52540">
    <property type="entry name" value="P-loop containing nucleoside triphosphate hydrolases"/>
    <property type="match status" value="1"/>
</dbReference>
<reference key="1">
    <citation type="journal article" date="2005" name="Science">
        <title>The transcriptional landscape of the mammalian genome.</title>
        <authorList>
            <person name="Carninci P."/>
            <person name="Kasukawa T."/>
            <person name="Katayama S."/>
            <person name="Gough J."/>
            <person name="Frith M.C."/>
            <person name="Maeda N."/>
            <person name="Oyama R."/>
            <person name="Ravasi T."/>
            <person name="Lenhard B."/>
            <person name="Wells C."/>
            <person name="Kodzius R."/>
            <person name="Shimokawa K."/>
            <person name="Bajic V.B."/>
            <person name="Brenner S.E."/>
            <person name="Batalov S."/>
            <person name="Forrest A.R."/>
            <person name="Zavolan M."/>
            <person name="Davis M.J."/>
            <person name="Wilming L.G."/>
            <person name="Aidinis V."/>
            <person name="Allen J.E."/>
            <person name="Ambesi-Impiombato A."/>
            <person name="Apweiler R."/>
            <person name="Aturaliya R.N."/>
            <person name="Bailey T.L."/>
            <person name="Bansal M."/>
            <person name="Baxter L."/>
            <person name="Beisel K.W."/>
            <person name="Bersano T."/>
            <person name="Bono H."/>
            <person name="Chalk A.M."/>
            <person name="Chiu K.P."/>
            <person name="Choudhary V."/>
            <person name="Christoffels A."/>
            <person name="Clutterbuck D.R."/>
            <person name="Crowe M.L."/>
            <person name="Dalla E."/>
            <person name="Dalrymple B.P."/>
            <person name="de Bono B."/>
            <person name="Della Gatta G."/>
            <person name="di Bernardo D."/>
            <person name="Down T."/>
            <person name="Engstrom P."/>
            <person name="Fagiolini M."/>
            <person name="Faulkner G."/>
            <person name="Fletcher C.F."/>
            <person name="Fukushima T."/>
            <person name="Furuno M."/>
            <person name="Futaki S."/>
            <person name="Gariboldi M."/>
            <person name="Georgii-Hemming P."/>
            <person name="Gingeras T.R."/>
            <person name="Gojobori T."/>
            <person name="Green R.E."/>
            <person name="Gustincich S."/>
            <person name="Harbers M."/>
            <person name="Hayashi Y."/>
            <person name="Hensch T.K."/>
            <person name="Hirokawa N."/>
            <person name="Hill D."/>
            <person name="Huminiecki L."/>
            <person name="Iacono M."/>
            <person name="Ikeo K."/>
            <person name="Iwama A."/>
            <person name="Ishikawa T."/>
            <person name="Jakt M."/>
            <person name="Kanapin A."/>
            <person name="Katoh M."/>
            <person name="Kawasawa Y."/>
            <person name="Kelso J."/>
            <person name="Kitamura H."/>
            <person name="Kitano H."/>
            <person name="Kollias G."/>
            <person name="Krishnan S.P."/>
            <person name="Kruger A."/>
            <person name="Kummerfeld S.K."/>
            <person name="Kurochkin I.V."/>
            <person name="Lareau L.F."/>
            <person name="Lazarevic D."/>
            <person name="Lipovich L."/>
            <person name="Liu J."/>
            <person name="Liuni S."/>
            <person name="McWilliam S."/>
            <person name="Madan Babu M."/>
            <person name="Madera M."/>
            <person name="Marchionni L."/>
            <person name="Matsuda H."/>
            <person name="Matsuzawa S."/>
            <person name="Miki H."/>
            <person name="Mignone F."/>
            <person name="Miyake S."/>
            <person name="Morris K."/>
            <person name="Mottagui-Tabar S."/>
            <person name="Mulder N."/>
            <person name="Nakano N."/>
            <person name="Nakauchi H."/>
            <person name="Ng P."/>
            <person name="Nilsson R."/>
            <person name="Nishiguchi S."/>
            <person name="Nishikawa S."/>
            <person name="Nori F."/>
            <person name="Ohara O."/>
            <person name="Okazaki Y."/>
            <person name="Orlando V."/>
            <person name="Pang K.C."/>
            <person name="Pavan W.J."/>
            <person name="Pavesi G."/>
            <person name="Pesole G."/>
            <person name="Petrovsky N."/>
            <person name="Piazza S."/>
            <person name="Reed J."/>
            <person name="Reid J.F."/>
            <person name="Ring B.Z."/>
            <person name="Ringwald M."/>
            <person name="Rost B."/>
            <person name="Ruan Y."/>
            <person name="Salzberg S.L."/>
            <person name="Sandelin A."/>
            <person name="Schneider C."/>
            <person name="Schoenbach C."/>
            <person name="Sekiguchi K."/>
            <person name="Semple C.A."/>
            <person name="Seno S."/>
            <person name="Sessa L."/>
            <person name="Sheng Y."/>
            <person name="Shibata Y."/>
            <person name="Shimada H."/>
            <person name="Shimada K."/>
            <person name="Silva D."/>
            <person name="Sinclair B."/>
            <person name="Sperling S."/>
            <person name="Stupka E."/>
            <person name="Sugiura K."/>
            <person name="Sultana R."/>
            <person name="Takenaka Y."/>
            <person name="Taki K."/>
            <person name="Tammoja K."/>
            <person name="Tan S.L."/>
            <person name="Tang S."/>
            <person name="Taylor M.S."/>
            <person name="Tegner J."/>
            <person name="Teichmann S.A."/>
            <person name="Ueda H.R."/>
            <person name="van Nimwegen E."/>
            <person name="Verardo R."/>
            <person name="Wei C.L."/>
            <person name="Yagi K."/>
            <person name="Yamanishi H."/>
            <person name="Zabarovsky E."/>
            <person name="Zhu S."/>
            <person name="Zimmer A."/>
            <person name="Hide W."/>
            <person name="Bult C."/>
            <person name="Grimmond S.M."/>
            <person name="Teasdale R.D."/>
            <person name="Liu E.T."/>
            <person name="Brusic V."/>
            <person name="Quackenbush J."/>
            <person name="Wahlestedt C."/>
            <person name="Mattick J.S."/>
            <person name="Hume D.A."/>
            <person name="Kai C."/>
            <person name="Sasaki D."/>
            <person name="Tomaru Y."/>
            <person name="Fukuda S."/>
            <person name="Kanamori-Katayama M."/>
            <person name="Suzuki M."/>
            <person name="Aoki J."/>
            <person name="Arakawa T."/>
            <person name="Iida J."/>
            <person name="Imamura K."/>
            <person name="Itoh M."/>
            <person name="Kato T."/>
            <person name="Kawaji H."/>
            <person name="Kawagashira N."/>
            <person name="Kawashima T."/>
            <person name="Kojima M."/>
            <person name="Kondo S."/>
            <person name="Konno H."/>
            <person name="Nakano K."/>
            <person name="Ninomiya N."/>
            <person name="Nishio T."/>
            <person name="Okada M."/>
            <person name="Plessy C."/>
            <person name="Shibata K."/>
            <person name="Shiraki T."/>
            <person name="Suzuki S."/>
            <person name="Tagami M."/>
            <person name="Waki K."/>
            <person name="Watahiki A."/>
            <person name="Okamura-Oho Y."/>
            <person name="Suzuki H."/>
            <person name="Kawai J."/>
            <person name="Hayashizaki Y."/>
        </authorList>
    </citation>
    <scope>NUCLEOTIDE SEQUENCE [LARGE SCALE MRNA] (ISOFORM 2)</scope>
    <scope>NUCLEOTIDE SEQUENCE [LARGE SCALE MRNA] OF 75-409 (ISOFORM 3)</scope>
    <source>
        <strain>C57BL/6J</strain>
        <tissue>Heart</tissue>
    </source>
</reference>
<reference key="2">
    <citation type="journal article" date="2009" name="PLoS Biol.">
        <title>Lineage-specific biology revealed by a finished genome assembly of the mouse.</title>
        <authorList>
            <person name="Church D.M."/>
            <person name="Goodstadt L."/>
            <person name="Hillier L.W."/>
            <person name="Zody M.C."/>
            <person name="Goldstein S."/>
            <person name="She X."/>
            <person name="Bult C.J."/>
            <person name="Agarwala R."/>
            <person name="Cherry J.L."/>
            <person name="DiCuccio M."/>
            <person name="Hlavina W."/>
            <person name="Kapustin Y."/>
            <person name="Meric P."/>
            <person name="Maglott D."/>
            <person name="Birtle Z."/>
            <person name="Marques A.C."/>
            <person name="Graves T."/>
            <person name="Zhou S."/>
            <person name="Teague B."/>
            <person name="Potamousis K."/>
            <person name="Churas C."/>
            <person name="Place M."/>
            <person name="Herschleb J."/>
            <person name="Runnheim R."/>
            <person name="Forrest D."/>
            <person name="Amos-Landgraf J."/>
            <person name="Schwartz D.C."/>
            <person name="Cheng Z."/>
            <person name="Lindblad-Toh K."/>
            <person name="Eichler E.E."/>
            <person name="Ponting C.P."/>
        </authorList>
    </citation>
    <scope>NUCLEOTIDE SEQUENCE [LARGE SCALE GENOMIC DNA]</scope>
    <source>
        <strain>C57BL/6J</strain>
    </source>
</reference>
<reference key="3">
    <citation type="journal article" date="2004" name="Genome Res.">
        <title>The status, quality, and expansion of the NIH full-length cDNA project: the Mammalian Gene Collection (MGC).</title>
        <authorList>
            <consortium name="The MGC Project Team"/>
        </authorList>
    </citation>
    <scope>NUCLEOTIDE SEQUENCE [LARGE SCALE MRNA] (ISOFORM 2)</scope>
    <scope>NUCLEOTIDE SEQUENCE [LARGE SCALE MRNA] OF 78-612 (ISOFORM 1)</scope>
    <source>
        <strain>FVB/N-3</strain>
        <tissue>Brain</tissue>
        <tissue>Mammary tumor</tissue>
    </source>
</reference>
<reference key="4">
    <citation type="journal article" date="2000" name="J. Biol. Chem.">
        <title>The occurrence of three isoforms of heparan sulfate 6-O-sulfotransferase having different specificities for hexuronic acid adjacent to the targeted N-sulfoglucosamine.</title>
        <authorList>
            <person name="Habuchi H."/>
            <person name="Tanaka M."/>
            <person name="Habuchi O."/>
            <person name="Yoshida K."/>
            <person name="Suzuki H."/>
            <person name="Ban K."/>
            <person name="Kimata K."/>
        </authorList>
    </citation>
    <scope>NUCLEOTIDE SEQUENCE [MRNA] OF 147-612 (ISOFORM 3)</scope>
    <source>
        <tissue>Brain</tissue>
    </source>
</reference>
<evidence type="ECO:0000250" key="1">
    <source>
        <dbReference type="UniProtKB" id="A0MGZ7"/>
    </source>
</evidence>
<evidence type="ECO:0000255" key="2"/>
<evidence type="ECO:0000256" key="3">
    <source>
        <dbReference type="SAM" id="MobiDB-lite"/>
    </source>
</evidence>
<evidence type="ECO:0000303" key="4">
    <source>
    </source>
</evidence>
<evidence type="ECO:0000303" key="5">
    <source>
    </source>
</evidence>
<evidence type="ECO:0000303" key="6">
    <source>
    </source>
</evidence>
<evidence type="ECO:0000305" key="7"/>
<feature type="chain" id="PRO_0000190806" description="Heparan-sulfate 6-O-sulfotransferase 2">
    <location>
        <begin position="1"/>
        <end position="612"/>
    </location>
</feature>
<feature type="topological domain" description="Cytoplasmic" evidence="2">
    <location>
        <begin position="1"/>
        <end position="4"/>
    </location>
</feature>
<feature type="transmembrane region" description="Helical; Signal-anchor for type II membrane protein" evidence="2">
    <location>
        <begin position="5"/>
        <end position="27"/>
    </location>
</feature>
<feature type="topological domain" description="Lumenal" evidence="2">
    <location>
        <begin position="28"/>
        <end position="612"/>
    </location>
</feature>
<feature type="region of interest" description="Disordered" evidence="3">
    <location>
        <begin position="9"/>
        <end position="52"/>
    </location>
</feature>
<feature type="region of interest" description="Disordered" evidence="3">
    <location>
        <begin position="529"/>
        <end position="612"/>
    </location>
</feature>
<feature type="compositionally biased region" description="Low complexity" evidence="3">
    <location>
        <begin position="531"/>
        <end position="564"/>
    </location>
</feature>
<feature type="compositionally biased region" description="Polar residues" evidence="3">
    <location>
        <begin position="565"/>
        <end position="577"/>
    </location>
</feature>
<feature type="active site" description="Proton acceptor" evidence="1">
    <location>
        <position position="290"/>
    </location>
</feature>
<feature type="binding site" evidence="1">
    <location>
        <begin position="233"/>
        <end position="241"/>
    </location>
    <ligand>
        <name>3'-phosphoadenylyl sulfate</name>
        <dbReference type="ChEBI" id="CHEBI:58339"/>
    </ligand>
</feature>
<feature type="binding site" evidence="1">
    <location>
        <begin position="263"/>
        <end position="264"/>
    </location>
    <ligand>
        <name>substrate</name>
    </ligand>
</feature>
<feature type="binding site" evidence="1">
    <location>
        <position position="280"/>
    </location>
    <ligand>
        <name>substrate</name>
    </ligand>
</feature>
<feature type="binding site" evidence="1">
    <location>
        <position position="285"/>
    </location>
    <ligand>
        <name>substrate</name>
    </ligand>
</feature>
<feature type="binding site" evidence="1">
    <location>
        <position position="290"/>
    </location>
    <ligand>
        <name>substrate</name>
    </ligand>
</feature>
<feature type="binding site" evidence="1">
    <location>
        <position position="325"/>
    </location>
    <ligand>
        <name>3'-phosphoadenylyl sulfate</name>
        <dbReference type="ChEBI" id="CHEBI:58339"/>
    </ligand>
</feature>
<feature type="binding site" evidence="1">
    <location>
        <position position="333"/>
    </location>
    <ligand>
        <name>3'-phosphoadenylyl sulfate</name>
        <dbReference type="ChEBI" id="CHEBI:58339"/>
    </ligand>
</feature>
<feature type="binding site" evidence="1">
    <location>
        <position position="337"/>
    </location>
    <ligand>
        <name>substrate</name>
    </ligand>
</feature>
<feature type="binding site" evidence="1">
    <location>
        <position position="344"/>
    </location>
    <ligand>
        <name>substrate</name>
    </ligand>
</feature>
<feature type="binding site" evidence="1">
    <location>
        <begin position="457"/>
        <end position="459"/>
    </location>
    <ligand>
        <name>3'-phosphoadenylyl sulfate</name>
        <dbReference type="ChEBI" id="CHEBI:58339"/>
    </ligand>
</feature>
<feature type="binding site" evidence="1">
    <location>
        <begin position="463"/>
        <end position="464"/>
    </location>
    <ligand>
        <name>3'-phosphoadenylyl sulfate</name>
        <dbReference type="ChEBI" id="CHEBI:58339"/>
    </ligand>
</feature>
<feature type="glycosylation site" description="N-linked (GlcNAc...) asparagine" evidence="2">
    <location>
        <position position="209"/>
    </location>
</feature>
<feature type="glycosylation site" description="N-linked (GlcNAc...) asparagine" evidence="2">
    <location>
        <position position="404"/>
    </location>
</feature>
<feature type="glycosylation site" description="N-linked (GlcNAc...) asparagine" evidence="2">
    <location>
        <position position="460"/>
    </location>
</feature>
<feature type="glycosylation site" description="N-linked (GlcNAc...) asparagine" evidence="2">
    <location>
        <position position="546"/>
    </location>
</feature>
<feature type="glycosylation site" description="N-linked (GlcNAc...) asparagine" evidence="2">
    <location>
        <position position="558"/>
    </location>
</feature>
<feature type="glycosylation site" description="N-linked (GlcNAc...) asparagine" evidence="2">
    <location>
        <position position="562"/>
    </location>
</feature>
<feature type="glycosylation site" description="N-linked (GlcNAc...) asparagine" evidence="2">
    <location>
        <position position="574"/>
    </location>
</feature>
<feature type="glycosylation site" description="N-linked (GlcNAc...) asparagine" evidence="2">
    <location>
        <position position="599"/>
    </location>
</feature>
<feature type="splice variant" id="VSP_015848" description="In isoform 2." evidence="5 6">
    <location>
        <begin position="1"/>
        <end position="146"/>
    </location>
</feature>
<feature type="splice variant" id="VSP_015849" description="In isoform 3." evidence="4 6">
    <original>R</original>
    <variation>RWRIFQILDGTSKDRWGSSNFNSGANSPSSTKPRSTSKSGK</variation>
    <location>
        <position position="316"/>
    </location>
</feature>
<feature type="sequence conflict" description="In Ref. 1; BAE42608." evidence="7" ref="1">
    <original>E</original>
    <variation>D</variation>
    <location>
        <position position="419"/>
    </location>
</feature>